<evidence type="ECO:0000255" key="1">
    <source>
        <dbReference type="HAMAP-Rule" id="MF_01702"/>
    </source>
</evidence>
<accession>P63364</accession>
<accession>Q927Z8</accession>
<gene>
    <name evidence="1" type="primary">pstB1</name>
    <name type="ordered locus">lin2638</name>
</gene>
<feature type="chain" id="PRO_0000092829" description="Phosphate import ATP-binding protein PstB 1">
    <location>
        <begin position="1"/>
        <end position="259"/>
    </location>
</feature>
<feature type="domain" description="ABC transporter" evidence="1">
    <location>
        <begin position="13"/>
        <end position="254"/>
    </location>
</feature>
<feature type="binding site" evidence="1">
    <location>
        <begin position="45"/>
        <end position="52"/>
    </location>
    <ligand>
        <name>ATP</name>
        <dbReference type="ChEBI" id="CHEBI:30616"/>
    </ligand>
</feature>
<reference key="1">
    <citation type="journal article" date="2001" name="Science">
        <title>Comparative genomics of Listeria species.</title>
        <authorList>
            <person name="Glaser P."/>
            <person name="Frangeul L."/>
            <person name="Buchrieser C."/>
            <person name="Rusniok C."/>
            <person name="Amend A."/>
            <person name="Baquero F."/>
            <person name="Berche P."/>
            <person name="Bloecker H."/>
            <person name="Brandt P."/>
            <person name="Chakraborty T."/>
            <person name="Charbit A."/>
            <person name="Chetouani F."/>
            <person name="Couve E."/>
            <person name="de Daruvar A."/>
            <person name="Dehoux P."/>
            <person name="Domann E."/>
            <person name="Dominguez-Bernal G."/>
            <person name="Duchaud E."/>
            <person name="Durant L."/>
            <person name="Dussurget O."/>
            <person name="Entian K.-D."/>
            <person name="Fsihi H."/>
            <person name="Garcia-del Portillo F."/>
            <person name="Garrido P."/>
            <person name="Gautier L."/>
            <person name="Goebel W."/>
            <person name="Gomez-Lopez N."/>
            <person name="Hain T."/>
            <person name="Hauf J."/>
            <person name="Jackson D."/>
            <person name="Jones L.-M."/>
            <person name="Kaerst U."/>
            <person name="Kreft J."/>
            <person name="Kuhn M."/>
            <person name="Kunst F."/>
            <person name="Kurapkat G."/>
            <person name="Madueno E."/>
            <person name="Maitournam A."/>
            <person name="Mata Vicente J."/>
            <person name="Ng E."/>
            <person name="Nedjari H."/>
            <person name="Nordsiek G."/>
            <person name="Novella S."/>
            <person name="de Pablos B."/>
            <person name="Perez-Diaz J.-C."/>
            <person name="Purcell R."/>
            <person name="Remmel B."/>
            <person name="Rose M."/>
            <person name="Schlueter T."/>
            <person name="Simoes N."/>
            <person name="Tierrez A."/>
            <person name="Vazquez-Boland J.-A."/>
            <person name="Voss H."/>
            <person name="Wehland J."/>
            <person name="Cossart P."/>
        </authorList>
    </citation>
    <scope>NUCLEOTIDE SEQUENCE [LARGE SCALE GENOMIC DNA]</scope>
    <source>
        <strain>ATCC BAA-680 / CLIP 11262</strain>
    </source>
</reference>
<keyword id="KW-0067">ATP-binding</keyword>
<keyword id="KW-1003">Cell membrane</keyword>
<keyword id="KW-0472">Membrane</keyword>
<keyword id="KW-0547">Nucleotide-binding</keyword>
<keyword id="KW-0592">Phosphate transport</keyword>
<keyword id="KW-1278">Translocase</keyword>
<keyword id="KW-0813">Transport</keyword>
<proteinExistence type="inferred from homology"/>
<organism>
    <name type="scientific">Listeria innocua serovar 6a (strain ATCC BAA-680 / CLIP 11262)</name>
    <dbReference type="NCBI Taxonomy" id="272626"/>
    <lineage>
        <taxon>Bacteria</taxon>
        <taxon>Bacillati</taxon>
        <taxon>Bacillota</taxon>
        <taxon>Bacilli</taxon>
        <taxon>Bacillales</taxon>
        <taxon>Listeriaceae</taxon>
        <taxon>Listeria</taxon>
    </lineage>
</organism>
<sequence>MTTETAEKVEYIIETKDVDLFYGSKQALQKIALNIKKNQVTALIGPSGCGKSTFLRTLNRMNDLIPNVKTTGEIHIGGENVQDPKIDMVNLRKKVGMVFQQANPFPFSIYDNVAYGPRMHGIKDKKVLDEIVERSLRQAALWEEVHDRLDRSAIGMSGGQQQRLCIARVLAVKPDVILMDEPTSALDPISTAKVEDLILELKKDYTIVIVTHNMQQASRISDETAFFLNGRIVEFADTTSIFTNPAEKETEDYISGRFG</sequence>
<dbReference type="EC" id="7.3.2.1" evidence="1"/>
<dbReference type="EMBL" id="AL596173">
    <property type="protein sequence ID" value="CAC97865.1"/>
    <property type="molecule type" value="Genomic_DNA"/>
</dbReference>
<dbReference type="PIR" id="AI1761">
    <property type="entry name" value="AI1761"/>
</dbReference>
<dbReference type="SMR" id="P63364"/>
<dbReference type="STRING" id="272626.gene:17567019"/>
<dbReference type="KEGG" id="lin:lin2638"/>
<dbReference type="eggNOG" id="COG1117">
    <property type="taxonomic scope" value="Bacteria"/>
</dbReference>
<dbReference type="HOGENOM" id="CLU_000604_1_22_9"/>
<dbReference type="OrthoDB" id="9802185at2"/>
<dbReference type="Proteomes" id="UP000002513">
    <property type="component" value="Chromosome"/>
</dbReference>
<dbReference type="GO" id="GO:0005886">
    <property type="term" value="C:plasma membrane"/>
    <property type="evidence" value="ECO:0007669"/>
    <property type="project" value="UniProtKB-SubCell"/>
</dbReference>
<dbReference type="GO" id="GO:0005524">
    <property type="term" value="F:ATP binding"/>
    <property type="evidence" value="ECO:0007669"/>
    <property type="project" value="UniProtKB-KW"/>
</dbReference>
<dbReference type="GO" id="GO:0016887">
    <property type="term" value="F:ATP hydrolysis activity"/>
    <property type="evidence" value="ECO:0007669"/>
    <property type="project" value="InterPro"/>
</dbReference>
<dbReference type="GO" id="GO:0015415">
    <property type="term" value="F:ATPase-coupled phosphate ion transmembrane transporter activity"/>
    <property type="evidence" value="ECO:0007669"/>
    <property type="project" value="UniProtKB-EC"/>
</dbReference>
<dbReference type="GO" id="GO:0035435">
    <property type="term" value="P:phosphate ion transmembrane transport"/>
    <property type="evidence" value="ECO:0007669"/>
    <property type="project" value="InterPro"/>
</dbReference>
<dbReference type="CDD" id="cd03260">
    <property type="entry name" value="ABC_PstB_phosphate_transporter"/>
    <property type="match status" value="1"/>
</dbReference>
<dbReference type="FunFam" id="3.40.50.300:FF:000132">
    <property type="entry name" value="Phosphate import ATP-binding protein PstB"/>
    <property type="match status" value="1"/>
</dbReference>
<dbReference type="Gene3D" id="3.40.50.300">
    <property type="entry name" value="P-loop containing nucleotide triphosphate hydrolases"/>
    <property type="match status" value="1"/>
</dbReference>
<dbReference type="InterPro" id="IPR003593">
    <property type="entry name" value="AAA+_ATPase"/>
</dbReference>
<dbReference type="InterPro" id="IPR003439">
    <property type="entry name" value="ABC_transporter-like_ATP-bd"/>
</dbReference>
<dbReference type="InterPro" id="IPR017871">
    <property type="entry name" value="ABC_transporter-like_CS"/>
</dbReference>
<dbReference type="InterPro" id="IPR027417">
    <property type="entry name" value="P-loop_NTPase"/>
</dbReference>
<dbReference type="InterPro" id="IPR005670">
    <property type="entry name" value="PstB-like"/>
</dbReference>
<dbReference type="NCBIfam" id="TIGR00972">
    <property type="entry name" value="3a0107s01c2"/>
    <property type="match status" value="1"/>
</dbReference>
<dbReference type="PANTHER" id="PTHR43423">
    <property type="entry name" value="ABC TRANSPORTER I FAMILY MEMBER 17"/>
    <property type="match status" value="1"/>
</dbReference>
<dbReference type="PANTHER" id="PTHR43423:SF1">
    <property type="entry name" value="ABC TRANSPORTER I FAMILY MEMBER 17"/>
    <property type="match status" value="1"/>
</dbReference>
<dbReference type="Pfam" id="PF00005">
    <property type="entry name" value="ABC_tran"/>
    <property type="match status" value="1"/>
</dbReference>
<dbReference type="SMART" id="SM00382">
    <property type="entry name" value="AAA"/>
    <property type="match status" value="1"/>
</dbReference>
<dbReference type="SUPFAM" id="SSF52540">
    <property type="entry name" value="P-loop containing nucleoside triphosphate hydrolases"/>
    <property type="match status" value="1"/>
</dbReference>
<dbReference type="PROSITE" id="PS00211">
    <property type="entry name" value="ABC_TRANSPORTER_1"/>
    <property type="match status" value="1"/>
</dbReference>
<dbReference type="PROSITE" id="PS50893">
    <property type="entry name" value="ABC_TRANSPORTER_2"/>
    <property type="match status" value="1"/>
</dbReference>
<dbReference type="PROSITE" id="PS51238">
    <property type="entry name" value="PSTB"/>
    <property type="match status" value="1"/>
</dbReference>
<name>PSTB1_LISIN</name>
<protein>
    <recommendedName>
        <fullName evidence="1">Phosphate import ATP-binding protein PstB 1</fullName>
        <ecNumber evidence="1">7.3.2.1</ecNumber>
    </recommendedName>
    <alternativeName>
        <fullName evidence="1">ABC phosphate transporter 1</fullName>
    </alternativeName>
    <alternativeName>
        <fullName evidence="1">Phosphate-transporting ATPase 1</fullName>
    </alternativeName>
</protein>
<comment type="function">
    <text evidence="1">Part of the ABC transporter complex PstSACB involved in phosphate import. Responsible for energy coupling to the transport system.</text>
</comment>
<comment type="catalytic activity">
    <reaction evidence="1">
        <text>phosphate(out) + ATP + H2O = ADP + 2 phosphate(in) + H(+)</text>
        <dbReference type="Rhea" id="RHEA:24440"/>
        <dbReference type="ChEBI" id="CHEBI:15377"/>
        <dbReference type="ChEBI" id="CHEBI:15378"/>
        <dbReference type="ChEBI" id="CHEBI:30616"/>
        <dbReference type="ChEBI" id="CHEBI:43474"/>
        <dbReference type="ChEBI" id="CHEBI:456216"/>
        <dbReference type="EC" id="7.3.2.1"/>
    </reaction>
</comment>
<comment type="subunit">
    <text evidence="1">The complex is composed of two ATP-binding proteins (PstB), two transmembrane proteins (PstC and PstA) and a solute-binding protein (PstS).</text>
</comment>
<comment type="subcellular location">
    <subcellularLocation>
        <location evidence="1">Cell membrane</location>
        <topology evidence="1">Peripheral membrane protein</topology>
    </subcellularLocation>
</comment>
<comment type="similarity">
    <text evidence="1">Belongs to the ABC transporter superfamily. Phosphate importer (TC 3.A.1.7) family.</text>
</comment>